<sequence>MAKDDVIQMQGEVIENLPNATFRVKLENGHVVLGHISGKMRMHYIRIFPGDKVTVELTPYDLSRARIVFRAK</sequence>
<accession>Q62GM6</accession>
<feature type="chain" id="PRO_0000095760" description="Translation initiation factor IF-1 2">
    <location>
        <begin position="1"/>
        <end position="72"/>
    </location>
</feature>
<feature type="domain" description="S1-like" evidence="1">
    <location>
        <begin position="1"/>
        <end position="72"/>
    </location>
</feature>
<comment type="function">
    <text evidence="1">One of the essential components for the initiation of protein synthesis. Stabilizes the binding of IF-2 and IF-3 on the 30S subunit to which N-formylmethionyl-tRNA(fMet) subsequently binds. Helps modulate mRNA selection, yielding the 30S pre-initiation complex (PIC). Upon addition of the 50S ribosomal subunit IF-1, IF-2 and IF-3 are released leaving the mature 70S translation initiation complex.</text>
</comment>
<comment type="subunit">
    <text evidence="1">Component of the 30S ribosomal translation pre-initiation complex which assembles on the 30S ribosome in the order IF-2 and IF-3, IF-1 and N-formylmethionyl-tRNA(fMet); mRNA recruitment can occur at any time during PIC assembly.</text>
</comment>
<comment type="subcellular location">
    <subcellularLocation>
        <location evidence="1">Cytoplasm</location>
    </subcellularLocation>
</comment>
<comment type="similarity">
    <text evidence="1">Belongs to the IF-1 family.</text>
</comment>
<organism>
    <name type="scientific">Burkholderia mallei (strain ATCC 23344)</name>
    <dbReference type="NCBI Taxonomy" id="243160"/>
    <lineage>
        <taxon>Bacteria</taxon>
        <taxon>Pseudomonadati</taxon>
        <taxon>Pseudomonadota</taxon>
        <taxon>Betaproteobacteria</taxon>
        <taxon>Burkholderiales</taxon>
        <taxon>Burkholderiaceae</taxon>
        <taxon>Burkholderia</taxon>
        <taxon>pseudomallei group</taxon>
    </lineage>
</organism>
<gene>
    <name evidence="1" type="primary">infA2</name>
    <name type="synonym">infA-2</name>
    <name type="ordered locus">BMA2611</name>
</gene>
<dbReference type="EMBL" id="CP000010">
    <property type="protein sequence ID" value="AAU47849.1"/>
    <property type="molecule type" value="Genomic_DNA"/>
</dbReference>
<dbReference type="RefSeq" id="YP_104145.1">
    <property type="nucleotide sequence ID" value="NC_006348.1"/>
</dbReference>
<dbReference type="SMR" id="Q62GM6"/>
<dbReference type="KEGG" id="bma:BMA2611"/>
<dbReference type="PATRIC" id="fig|243160.12.peg.2682"/>
<dbReference type="eggNOG" id="COG0361">
    <property type="taxonomic scope" value="Bacteria"/>
</dbReference>
<dbReference type="HOGENOM" id="CLU_151267_1_0_4"/>
<dbReference type="Proteomes" id="UP000006693">
    <property type="component" value="Chromosome 1"/>
</dbReference>
<dbReference type="GO" id="GO:0005829">
    <property type="term" value="C:cytosol"/>
    <property type="evidence" value="ECO:0007669"/>
    <property type="project" value="TreeGrafter"/>
</dbReference>
<dbReference type="GO" id="GO:0043022">
    <property type="term" value="F:ribosome binding"/>
    <property type="evidence" value="ECO:0007669"/>
    <property type="project" value="UniProtKB-UniRule"/>
</dbReference>
<dbReference type="GO" id="GO:0019843">
    <property type="term" value="F:rRNA binding"/>
    <property type="evidence" value="ECO:0007669"/>
    <property type="project" value="UniProtKB-UniRule"/>
</dbReference>
<dbReference type="GO" id="GO:0003743">
    <property type="term" value="F:translation initiation factor activity"/>
    <property type="evidence" value="ECO:0007669"/>
    <property type="project" value="UniProtKB-UniRule"/>
</dbReference>
<dbReference type="CDD" id="cd04451">
    <property type="entry name" value="S1_IF1"/>
    <property type="match status" value="1"/>
</dbReference>
<dbReference type="FunFam" id="2.40.50.140:FF:000002">
    <property type="entry name" value="Translation initiation factor IF-1"/>
    <property type="match status" value="1"/>
</dbReference>
<dbReference type="Gene3D" id="2.40.50.140">
    <property type="entry name" value="Nucleic acid-binding proteins"/>
    <property type="match status" value="1"/>
</dbReference>
<dbReference type="HAMAP" id="MF_00075">
    <property type="entry name" value="IF_1"/>
    <property type="match status" value="1"/>
</dbReference>
<dbReference type="InterPro" id="IPR012340">
    <property type="entry name" value="NA-bd_OB-fold"/>
</dbReference>
<dbReference type="InterPro" id="IPR006196">
    <property type="entry name" value="RNA-binding_domain_S1_IF1"/>
</dbReference>
<dbReference type="InterPro" id="IPR003029">
    <property type="entry name" value="S1_domain"/>
</dbReference>
<dbReference type="InterPro" id="IPR004368">
    <property type="entry name" value="TIF_IF1"/>
</dbReference>
<dbReference type="NCBIfam" id="TIGR00008">
    <property type="entry name" value="infA"/>
    <property type="match status" value="1"/>
</dbReference>
<dbReference type="PANTHER" id="PTHR33370">
    <property type="entry name" value="TRANSLATION INITIATION FACTOR IF-1, CHLOROPLASTIC"/>
    <property type="match status" value="1"/>
</dbReference>
<dbReference type="PANTHER" id="PTHR33370:SF1">
    <property type="entry name" value="TRANSLATION INITIATION FACTOR IF-1, CHLOROPLASTIC"/>
    <property type="match status" value="1"/>
</dbReference>
<dbReference type="Pfam" id="PF01176">
    <property type="entry name" value="eIF-1a"/>
    <property type="match status" value="1"/>
</dbReference>
<dbReference type="SMART" id="SM00316">
    <property type="entry name" value="S1"/>
    <property type="match status" value="1"/>
</dbReference>
<dbReference type="SUPFAM" id="SSF50249">
    <property type="entry name" value="Nucleic acid-binding proteins"/>
    <property type="match status" value="1"/>
</dbReference>
<dbReference type="PROSITE" id="PS50832">
    <property type="entry name" value="S1_IF1_TYPE"/>
    <property type="match status" value="1"/>
</dbReference>
<evidence type="ECO:0000255" key="1">
    <source>
        <dbReference type="HAMAP-Rule" id="MF_00075"/>
    </source>
</evidence>
<proteinExistence type="inferred from homology"/>
<name>IF12_BURMA</name>
<reference key="1">
    <citation type="journal article" date="2004" name="Proc. Natl. Acad. Sci. U.S.A.">
        <title>Structural flexibility in the Burkholderia mallei genome.</title>
        <authorList>
            <person name="Nierman W.C."/>
            <person name="DeShazer D."/>
            <person name="Kim H.S."/>
            <person name="Tettelin H."/>
            <person name="Nelson K.E."/>
            <person name="Feldblyum T.V."/>
            <person name="Ulrich R.L."/>
            <person name="Ronning C.M."/>
            <person name="Brinkac L.M."/>
            <person name="Daugherty S.C."/>
            <person name="Davidsen T.D."/>
            <person name="DeBoy R.T."/>
            <person name="Dimitrov G."/>
            <person name="Dodson R.J."/>
            <person name="Durkin A.S."/>
            <person name="Gwinn M.L."/>
            <person name="Haft D.H."/>
            <person name="Khouri H.M."/>
            <person name="Kolonay J.F."/>
            <person name="Madupu R."/>
            <person name="Mohammoud Y."/>
            <person name="Nelson W.C."/>
            <person name="Radune D."/>
            <person name="Romero C.M."/>
            <person name="Sarria S."/>
            <person name="Selengut J."/>
            <person name="Shamblin C."/>
            <person name="Sullivan S.A."/>
            <person name="White O."/>
            <person name="Yu Y."/>
            <person name="Zafar N."/>
            <person name="Zhou L."/>
            <person name="Fraser C.M."/>
        </authorList>
    </citation>
    <scope>NUCLEOTIDE SEQUENCE [LARGE SCALE GENOMIC DNA]</scope>
    <source>
        <strain>ATCC 23344</strain>
    </source>
</reference>
<keyword id="KW-0963">Cytoplasm</keyword>
<keyword id="KW-0396">Initiation factor</keyword>
<keyword id="KW-0648">Protein biosynthesis</keyword>
<keyword id="KW-1185">Reference proteome</keyword>
<keyword id="KW-0694">RNA-binding</keyword>
<keyword id="KW-0699">rRNA-binding</keyword>
<protein>
    <recommendedName>
        <fullName evidence="1">Translation initiation factor IF-1 2</fullName>
    </recommendedName>
</protein>